<reference key="1">
    <citation type="journal article" date="2015" name="Toxins">
        <title>Three peptide modulators of the human voltage-gated sodium channel 1.7, an important analgesic target, from the venom of an Australian tarantula.</title>
        <authorList>
            <person name="Chow C.Y."/>
            <person name="Cristofori-Armstrong B."/>
            <person name="Undheim E.A."/>
            <person name="King G.F."/>
            <person name="Rash L.D."/>
        </authorList>
    </citation>
    <scope>NUCLEOTIDE SEQUENCE [MRNA]</scope>
    <scope>PROTEIN SEQUENCE OF 59-71</scope>
    <scope>FUNCTION</scope>
    <scope>MASS SPECTROMETRY</scope>
    <scope>AMIDATION AT PHE-85</scope>
    <scope>SUBCELLULAR LOCATION</scope>
    <source>
        <tissue>Venom</tissue>
        <tissue>Venom gland</tissue>
    </source>
</reference>
<protein>
    <recommendedName>
        <fullName evidence="4">Mu-theraphotoxin-Phlo1b</fullName>
        <shortName evidence="4">Mu-TRTX-Phlo1b</shortName>
    </recommendedName>
</protein>
<dbReference type="SMR" id="P0DL58"/>
<dbReference type="GO" id="GO:0005576">
    <property type="term" value="C:extracellular region"/>
    <property type="evidence" value="ECO:0007669"/>
    <property type="project" value="UniProtKB-SubCell"/>
</dbReference>
<dbReference type="GO" id="GO:0008200">
    <property type="term" value="F:ion channel inhibitor activity"/>
    <property type="evidence" value="ECO:0007669"/>
    <property type="project" value="InterPro"/>
</dbReference>
<dbReference type="GO" id="GO:0017080">
    <property type="term" value="F:sodium channel regulator activity"/>
    <property type="evidence" value="ECO:0007669"/>
    <property type="project" value="UniProtKB-KW"/>
</dbReference>
<dbReference type="GO" id="GO:0090729">
    <property type="term" value="F:toxin activity"/>
    <property type="evidence" value="ECO:0007669"/>
    <property type="project" value="UniProtKB-KW"/>
</dbReference>
<dbReference type="InterPro" id="IPR011696">
    <property type="entry name" value="Huwentoxin-1"/>
</dbReference>
<dbReference type="Pfam" id="PF07740">
    <property type="entry name" value="Toxin_12"/>
    <property type="match status" value="1"/>
</dbReference>
<dbReference type="SUPFAM" id="SSF57059">
    <property type="entry name" value="omega toxin-like"/>
    <property type="match status" value="1"/>
</dbReference>
<evidence type="ECO:0000250" key="1">
    <source>
        <dbReference type="UniProtKB" id="P0C247"/>
    </source>
</evidence>
<evidence type="ECO:0000255" key="2"/>
<evidence type="ECO:0000269" key="3">
    <source>
    </source>
</evidence>
<evidence type="ECO:0000303" key="4">
    <source>
    </source>
</evidence>
<evidence type="ECO:0000305" key="5"/>
<evidence type="ECO:0000305" key="6">
    <source>
    </source>
</evidence>
<feature type="signal peptide" evidence="2">
    <location>
        <begin position="1"/>
        <end position="22"/>
    </location>
</feature>
<feature type="propeptide" id="PRO_0000434303" evidence="5">
    <location>
        <begin position="23"/>
        <end position="50"/>
    </location>
</feature>
<feature type="chain" id="PRO_0000434304" description="Mu-theraphotoxin-Phlo1b" evidence="3">
    <location>
        <begin position="51"/>
        <end position="85"/>
    </location>
</feature>
<feature type="propeptide" id="PRO_0000434305" evidence="5">
    <location>
        <begin position="86"/>
        <end position="90"/>
    </location>
</feature>
<feature type="modified residue" description="Phenylalanine amide" evidence="3">
    <location>
        <position position="85"/>
    </location>
</feature>
<feature type="disulfide bond" evidence="1">
    <location>
        <begin position="52"/>
        <end position="66"/>
    </location>
</feature>
<feature type="disulfide bond" evidence="1">
    <location>
        <begin position="59"/>
        <end position="71"/>
    </location>
</feature>
<feature type="disulfide bond" evidence="1">
    <location>
        <begin position="65"/>
        <end position="79"/>
    </location>
</feature>
<keyword id="KW-0027">Amidation</keyword>
<keyword id="KW-0123">Cardiotoxin</keyword>
<keyword id="KW-0903">Direct protein sequencing</keyword>
<keyword id="KW-1015">Disulfide bond</keyword>
<keyword id="KW-0872">Ion channel impairing toxin</keyword>
<keyword id="KW-0528">Neurotoxin</keyword>
<keyword id="KW-0964">Secreted</keyword>
<keyword id="KW-0732">Signal</keyword>
<keyword id="KW-0800">Toxin</keyword>
<keyword id="KW-0738">Voltage-gated sodium channel impairing toxin</keyword>
<organism>
    <name type="scientific">Phlogius sp.</name>
    <name type="common">Tarantula spider</name>
    <dbReference type="NCBI Taxonomy" id="1690075"/>
    <lineage>
        <taxon>Eukaryota</taxon>
        <taxon>Metazoa</taxon>
        <taxon>Ecdysozoa</taxon>
        <taxon>Arthropoda</taxon>
        <taxon>Chelicerata</taxon>
        <taxon>Arachnida</taxon>
        <taxon>Araneae</taxon>
        <taxon>Mygalomorphae</taxon>
        <taxon>Theraphosidae</taxon>
        <taxon>Phlogius</taxon>
    </lineage>
</organism>
<name>HM1B_PHLSP</name>
<proteinExistence type="evidence at protein level"/>
<accession>P0DL58</accession>
<comment type="function">
    <text evidence="3">Gating-modifier toxin that inhibits voltage-gated sodium channel Nav by shifting the threshold for channel activation to more positive potentials. This toxin moderately inhibits human Nav1.7/SCN9A (IC(50)=360 nM) and weakly inhibits hNav1.2/SCN2A (37% inhibition at 1 uM peptide) and hNav1.5/SCN5A (&lt;20% inhibition at 1 uM peptide). Inhibition of Nav1.7 is voltage-dependent, with lower inhibition at more positive test pulses.</text>
</comment>
<comment type="subcellular location">
    <subcellularLocation>
        <location evidence="3">Secreted</location>
    </subcellularLocation>
</comment>
<comment type="tissue specificity">
    <text evidence="6">Expressed by the venom gland.</text>
</comment>
<comment type="domain">
    <text evidence="6">The presence of a 'disulfide through disulfide knot' structurally defines this protein as a knottin.</text>
</comment>
<comment type="mass spectrometry">
    <text>Monoisotopic mass.</text>
</comment>
<comment type="similarity">
    <text evidence="5">Belongs to the neurotoxin 10 (Hwtx-1) family. 39 (Jztx-34) subfamily.</text>
</comment>
<sequence>MKVSVLITLAVLGVMFVWTSAAEQEDHGSDRRDSPALLKSLGRVFQSEERACRELLGGCSKDSDCCAHLECRKKWPYHCVWDWTFGNEKS</sequence>